<keyword id="KW-0963">Cytoplasm</keyword>
<keyword id="KW-1185">Reference proteome</keyword>
<keyword id="KW-0683">Retinol-binding</keyword>
<keyword id="KW-0813">Transport</keyword>
<keyword id="KW-0845">Vitamin A</keyword>
<reference key="1">
    <citation type="journal article" date="2005" name="Evol. Dev.">
        <title>Comprehensive survey of carapacial ridge-specific genes in turtle implies co-option of some regulatory genes in carapace evolution.</title>
        <authorList>
            <person name="Kuraku S."/>
            <person name="Usuda R."/>
            <person name="Kuratani S."/>
        </authorList>
    </citation>
    <scope>NUCLEOTIDE SEQUENCE [MRNA]</scope>
</reference>
<proteinExistence type="evidence at transcript level"/>
<sequence length="137" mass="15690">MPNFAGTWKMKSSENFDELLRALGVNAMLRKVAVAAASKPHVEIRQDGDQFYIKTSTTVRTTEINFQVGESFQEETVDGRKCRSLATWENENKIYCKQTLIEGEGPKTYWTRELVNDELILTFGADDVVCTRIYVRE</sequence>
<organism>
    <name type="scientific">Pelodiscus sinensis</name>
    <name type="common">Chinese softshell turtle</name>
    <name type="synonym">Trionyx sinensis</name>
    <dbReference type="NCBI Taxonomy" id="13735"/>
    <lineage>
        <taxon>Eukaryota</taxon>
        <taxon>Metazoa</taxon>
        <taxon>Chordata</taxon>
        <taxon>Craniata</taxon>
        <taxon>Vertebrata</taxon>
        <taxon>Euteleostomi</taxon>
        <taxon>Archelosauria</taxon>
        <taxon>Testudinata</taxon>
        <taxon>Testudines</taxon>
        <taxon>Cryptodira</taxon>
        <taxon>Trionychia</taxon>
        <taxon>Trionychidae</taxon>
        <taxon>Pelodiscus</taxon>
    </lineage>
</organism>
<gene>
    <name type="primary">CRABP1</name>
</gene>
<comment type="function">
    <text evidence="1">Cytosolic CRABPs may regulate the access of retinoic acid to the nuclear retinoic acid receptors.</text>
</comment>
<comment type="subcellular location">
    <subcellularLocation>
        <location evidence="1">Cytoplasm</location>
    </subcellularLocation>
</comment>
<comment type="domain">
    <text evidence="1">Forms a beta-barrel structure that accommodates hydrophobic ligands in its interior.</text>
</comment>
<comment type="similarity">
    <text evidence="2">Belongs to the calycin superfamily. Fatty-acid binding protein (FABP) family.</text>
</comment>
<accession>Q5R2J5</accession>
<protein>
    <recommendedName>
        <fullName>Cellular retinoic acid-binding protein 1</fullName>
    </recommendedName>
    <alternativeName>
        <fullName>Cellular retinoic acid-binding protein I</fullName>
        <shortName>CRABP-I</shortName>
    </alternativeName>
</protein>
<evidence type="ECO:0000250" key="1"/>
<evidence type="ECO:0000305" key="2"/>
<name>RABP1_PELSI</name>
<feature type="initiator methionine" description="Removed" evidence="1">
    <location>
        <position position="1"/>
    </location>
</feature>
<feature type="chain" id="PRO_0000067412" description="Cellular retinoic acid-binding protein 1">
    <location>
        <begin position="2"/>
        <end position="137"/>
    </location>
</feature>
<feature type="short sequence motif" description="Nuclear localization signal" evidence="1">
    <location>
        <begin position="21"/>
        <end position="31"/>
    </location>
</feature>
<feature type="binding site" evidence="1">
    <location>
        <begin position="132"/>
        <end position="134"/>
    </location>
    <ligand>
        <name>all-trans-retinoate</name>
        <dbReference type="ChEBI" id="CHEBI:35291"/>
    </ligand>
</feature>
<dbReference type="EMBL" id="AB124564">
    <property type="protein sequence ID" value="BAD74114.1"/>
    <property type="molecule type" value="mRNA"/>
</dbReference>
<dbReference type="RefSeq" id="NP_001273817.1">
    <property type="nucleotide sequence ID" value="NM_001286888.1"/>
</dbReference>
<dbReference type="SMR" id="Q5R2J5"/>
<dbReference type="STRING" id="13735.ENSPSIP00000008090"/>
<dbReference type="GeneID" id="102454528"/>
<dbReference type="KEGG" id="pss:102454528"/>
<dbReference type="CTD" id="1381"/>
<dbReference type="eggNOG" id="KOG4015">
    <property type="taxonomic scope" value="Eukaryota"/>
</dbReference>
<dbReference type="OrthoDB" id="195110at2759"/>
<dbReference type="Proteomes" id="UP000007267">
    <property type="component" value="Unassembled WGS sequence"/>
</dbReference>
<dbReference type="GO" id="GO:0005737">
    <property type="term" value="C:cytoplasm"/>
    <property type="evidence" value="ECO:0007669"/>
    <property type="project" value="UniProtKB-SubCell"/>
</dbReference>
<dbReference type="GO" id="GO:0016918">
    <property type="term" value="F:retinal binding"/>
    <property type="evidence" value="ECO:0007669"/>
    <property type="project" value="UniProtKB-KW"/>
</dbReference>
<dbReference type="GO" id="GO:0019841">
    <property type="term" value="F:retinol binding"/>
    <property type="evidence" value="ECO:0007669"/>
    <property type="project" value="UniProtKB-KW"/>
</dbReference>
<dbReference type="FunFam" id="2.40.128.20:FF:000001">
    <property type="entry name" value="Fatty acid-binding protein, adipocyte"/>
    <property type="match status" value="1"/>
</dbReference>
<dbReference type="Gene3D" id="2.40.128.20">
    <property type="match status" value="1"/>
</dbReference>
<dbReference type="InterPro" id="IPR012674">
    <property type="entry name" value="Calycin"/>
</dbReference>
<dbReference type="InterPro" id="IPR000463">
    <property type="entry name" value="Fatty_acid-bd"/>
</dbReference>
<dbReference type="InterPro" id="IPR031259">
    <property type="entry name" value="ILBP"/>
</dbReference>
<dbReference type="InterPro" id="IPR000566">
    <property type="entry name" value="Lipocln_cytosolic_FA-bd_dom"/>
</dbReference>
<dbReference type="PANTHER" id="PTHR11955">
    <property type="entry name" value="FATTY ACID BINDING PROTEIN"/>
    <property type="match status" value="1"/>
</dbReference>
<dbReference type="Pfam" id="PF00061">
    <property type="entry name" value="Lipocalin"/>
    <property type="match status" value="1"/>
</dbReference>
<dbReference type="PRINTS" id="PR00178">
    <property type="entry name" value="FATTYACIDBP"/>
</dbReference>
<dbReference type="SUPFAM" id="SSF50814">
    <property type="entry name" value="Lipocalins"/>
    <property type="match status" value="1"/>
</dbReference>
<dbReference type="PROSITE" id="PS00214">
    <property type="entry name" value="FABP"/>
    <property type="match status" value="1"/>
</dbReference>